<accession>Q0SNE8</accession>
<accession>G0IS10</accession>
<organism>
    <name type="scientific">Borreliella afzelii (strain PKo)</name>
    <name type="common">Borrelia afzelii</name>
    <dbReference type="NCBI Taxonomy" id="390236"/>
    <lineage>
        <taxon>Bacteria</taxon>
        <taxon>Pseudomonadati</taxon>
        <taxon>Spirochaetota</taxon>
        <taxon>Spirochaetia</taxon>
        <taxon>Spirochaetales</taxon>
        <taxon>Borreliaceae</taxon>
        <taxon>Borreliella</taxon>
    </lineage>
</organism>
<gene>
    <name evidence="1" type="primary">apeA</name>
    <name type="ordered locus">BAPKO_0374</name>
    <name type="ordered locus">BafPKo_0365</name>
</gene>
<reference key="1">
    <citation type="journal article" date="2006" name="BMC Genomics">
        <title>Comparative genome analysis: selection pressure on the Borrelia vls cassettes is essential for infectivity.</title>
        <authorList>
            <person name="Gloeckner G."/>
            <person name="Schulte-Spechtel U."/>
            <person name="Schilhabel M."/>
            <person name="Felder M."/>
            <person name="Suehnel J."/>
            <person name="Wilske B."/>
            <person name="Platzer M."/>
        </authorList>
    </citation>
    <scope>NUCLEOTIDE SEQUENCE [LARGE SCALE GENOMIC DNA]</scope>
    <source>
        <strain>PKo</strain>
    </source>
</reference>
<reference key="2">
    <citation type="journal article" date="2011" name="J. Bacteriol.">
        <title>Whole-genome sequences of two Borrelia afzelii and two Borrelia garinii Lyme disease agent isolates.</title>
        <authorList>
            <person name="Casjens S.R."/>
            <person name="Mongodin E.F."/>
            <person name="Qiu W.G."/>
            <person name="Dunn J.J."/>
            <person name="Luft B.J."/>
            <person name="Fraser-Liggett C.M."/>
            <person name="Schutzer S.E."/>
        </authorList>
    </citation>
    <scope>NUCLEOTIDE SEQUENCE [LARGE SCALE GENOMIC DNA]</scope>
    <source>
        <strain>PKo</strain>
    </source>
</reference>
<dbReference type="EC" id="3.4.11.-" evidence="1"/>
<dbReference type="EMBL" id="CP000395">
    <property type="protein sequence ID" value="ABH01630.1"/>
    <property type="molecule type" value="Genomic_DNA"/>
</dbReference>
<dbReference type="EMBL" id="CP002933">
    <property type="protein sequence ID" value="AEL69591.1"/>
    <property type="molecule type" value="Genomic_DNA"/>
</dbReference>
<dbReference type="RefSeq" id="WP_004790261.1">
    <property type="nucleotide sequence ID" value="NZ_CP160066.1"/>
</dbReference>
<dbReference type="SMR" id="Q0SNE8"/>
<dbReference type="STRING" id="29518.BLA32_02485"/>
<dbReference type="KEGG" id="baf:BAPKO_0374"/>
<dbReference type="KEGG" id="bafz:BafPKo_0365"/>
<dbReference type="PATRIC" id="fig|390236.22.peg.358"/>
<dbReference type="eggNOG" id="COG1362">
    <property type="taxonomic scope" value="Bacteria"/>
</dbReference>
<dbReference type="HOGENOM" id="CLU_590123_0_0_12"/>
<dbReference type="OrthoDB" id="89722at2"/>
<dbReference type="Proteomes" id="UP000005216">
    <property type="component" value="Chromosome"/>
</dbReference>
<dbReference type="GO" id="GO:0005737">
    <property type="term" value="C:cytoplasm"/>
    <property type="evidence" value="ECO:0007669"/>
    <property type="project" value="UniProtKB-ARBA"/>
</dbReference>
<dbReference type="GO" id="GO:0004177">
    <property type="term" value="F:aminopeptidase activity"/>
    <property type="evidence" value="ECO:0007669"/>
    <property type="project" value="UniProtKB-UniRule"/>
</dbReference>
<dbReference type="GO" id="GO:0008237">
    <property type="term" value="F:metallopeptidase activity"/>
    <property type="evidence" value="ECO:0007669"/>
    <property type="project" value="UniProtKB-UniRule"/>
</dbReference>
<dbReference type="GO" id="GO:0008270">
    <property type="term" value="F:zinc ion binding"/>
    <property type="evidence" value="ECO:0007669"/>
    <property type="project" value="UniProtKB-UniRule"/>
</dbReference>
<dbReference type="GO" id="GO:0006508">
    <property type="term" value="P:proteolysis"/>
    <property type="evidence" value="ECO:0007669"/>
    <property type="project" value="UniProtKB-UniRule"/>
</dbReference>
<dbReference type="CDD" id="cd05659">
    <property type="entry name" value="M18_API"/>
    <property type="match status" value="1"/>
</dbReference>
<dbReference type="FunFam" id="2.30.250.10:FF:000006">
    <property type="entry name" value="Probable M18 family aminopeptidase 1"/>
    <property type="match status" value="1"/>
</dbReference>
<dbReference type="Gene3D" id="2.30.250.10">
    <property type="entry name" value="Aminopeptidase i, Domain 2"/>
    <property type="match status" value="1"/>
</dbReference>
<dbReference type="Gene3D" id="3.40.630.10">
    <property type="entry name" value="Zn peptidases"/>
    <property type="match status" value="1"/>
</dbReference>
<dbReference type="HAMAP" id="MF_00466">
    <property type="entry name" value="Aminopeptidase_M18_1"/>
    <property type="match status" value="1"/>
</dbReference>
<dbReference type="InterPro" id="IPR022983">
    <property type="entry name" value="M18_aminopeptidase_1"/>
</dbReference>
<dbReference type="InterPro" id="IPR001948">
    <property type="entry name" value="Peptidase_M18"/>
</dbReference>
<dbReference type="InterPro" id="IPR023358">
    <property type="entry name" value="Peptidase_M18_dom2"/>
</dbReference>
<dbReference type="NCBIfam" id="NF002600">
    <property type="entry name" value="PRK02256.1"/>
    <property type="match status" value="1"/>
</dbReference>
<dbReference type="PANTHER" id="PTHR28570">
    <property type="entry name" value="ASPARTYL AMINOPEPTIDASE"/>
    <property type="match status" value="1"/>
</dbReference>
<dbReference type="PANTHER" id="PTHR28570:SF2">
    <property type="entry name" value="M18 FAMILY AMINOPEPTIDASE 1-RELATED"/>
    <property type="match status" value="1"/>
</dbReference>
<dbReference type="Pfam" id="PF02127">
    <property type="entry name" value="Peptidase_M18"/>
    <property type="match status" value="1"/>
</dbReference>
<dbReference type="PRINTS" id="PR00932">
    <property type="entry name" value="AMINO1PTASE"/>
</dbReference>
<dbReference type="SUPFAM" id="SSF101821">
    <property type="entry name" value="Aminopeptidase/glucanase lid domain"/>
    <property type="match status" value="1"/>
</dbReference>
<dbReference type="SUPFAM" id="SSF53187">
    <property type="entry name" value="Zn-dependent exopeptidases"/>
    <property type="match status" value="1"/>
</dbReference>
<proteinExistence type="inferred from homology"/>
<name>APEA_BORAP</name>
<protein>
    <recommendedName>
        <fullName evidence="1">Probable M18 family aminopeptidase 1</fullName>
        <ecNumber evidence="1">3.4.11.-</ecNumber>
    </recommendedName>
</protein>
<evidence type="ECO:0000255" key="1">
    <source>
        <dbReference type="HAMAP-Rule" id="MF_00466"/>
    </source>
</evidence>
<sequence length="458" mass="51478">MKKQNPWISLSEEEKNQIFNFSENYKKFISKFKTEREVASYALDKAKKKGFLNAEEKKNLMPGDKIFYTCREKTVAFAIIGKNPIENGMNLIVSHTDSPRLDAKPSPISEENELVFLKTNYYGGIKKYQWLSTPLSIRGVIFLKNGEKVEINIGDNENDPVFIIPDILPHLDRKIQRNKKSDEIIEGENLKILIGSLPIETKEKNKVKLATLQLIKEKYKIEEEDFVSSEIEIVPAGTAKDVGFDKALIGAYGQDDKICVYTSLESIFDLEEIPNKTAICFLVDKEEIGSTGSTGLDSRYLEYFVSDMIFKIKKSEYNNLHVQKALWNSKSISADVCAAINPLFSSVHDEQNAPKLGYGIPIMKYTGHGGKSMASDADAELVSYIRQLLNKNNIAWQVATLGKVEEGGGGTVAKFLAGYGIRTIDMGPAVISMHSPMEITSKFDLYNAYLAYKAFYKE</sequence>
<keyword id="KW-0031">Aminopeptidase</keyword>
<keyword id="KW-0378">Hydrolase</keyword>
<keyword id="KW-0479">Metal-binding</keyword>
<keyword id="KW-0482">Metalloprotease</keyword>
<keyword id="KW-0645">Protease</keyword>
<keyword id="KW-0862">Zinc</keyword>
<comment type="cofactor">
    <cofactor evidence="1">
        <name>Zn(2+)</name>
        <dbReference type="ChEBI" id="CHEBI:29105"/>
    </cofactor>
</comment>
<comment type="similarity">
    <text evidence="1">Belongs to the peptidase M18 family.</text>
</comment>
<feature type="chain" id="PRO_1000013695" description="Probable M18 family aminopeptidase 1">
    <location>
        <begin position="1"/>
        <end position="458"/>
    </location>
</feature>
<feature type="binding site" evidence="1">
    <location>
        <position position="95"/>
    </location>
    <ligand>
        <name>Zn(2+)</name>
        <dbReference type="ChEBI" id="CHEBI:29105"/>
    </ligand>
</feature>
<feature type="binding site" evidence="1">
    <location>
        <position position="170"/>
    </location>
    <ligand>
        <name>Zn(2+)</name>
        <dbReference type="ChEBI" id="CHEBI:29105"/>
    </ligand>
</feature>
<feature type="binding site" evidence="1">
    <location>
        <position position="434"/>
    </location>
    <ligand>
        <name>Zn(2+)</name>
        <dbReference type="ChEBI" id="CHEBI:29105"/>
    </ligand>
</feature>